<accession>A4SRD4</accession>
<comment type="function">
    <text evidence="1">Required for accurate and efficient protein synthesis under certain stress conditions. May act as a fidelity factor of the translation reaction, by catalyzing a one-codon backward translocation of tRNAs on improperly translocated ribosomes. Back-translocation proceeds from a post-translocation (POST) complex to a pre-translocation (PRE) complex, thus giving elongation factor G a second chance to translocate the tRNAs correctly. Binds to ribosomes in a GTP-dependent manner.</text>
</comment>
<comment type="catalytic activity">
    <reaction evidence="1">
        <text>GTP + H2O = GDP + phosphate + H(+)</text>
        <dbReference type="Rhea" id="RHEA:19669"/>
        <dbReference type="ChEBI" id="CHEBI:15377"/>
        <dbReference type="ChEBI" id="CHEBI:15378"/>
        <dbReference type="ChEBI" id="CHEBI:37565"/>
        <dbReference type="ChEBI" id="CHEBI:43474"/>
        <dbReference type="ChEBI" id="CHEBI:58189"/>
        <dbReference type="EC" id="3.6.5.n1"/>
    </reaction>
</comment>
<comment type="subcellular location">
    <subcellularLocation>
        <location evidence="1">Cell inner membrane</location>
        <topology evidence="1">Peripheral membrane protein</topology>
        <orientation evidence="1">Cytoplasmic side</orientation>
    </subcellularLocation>
</comment>
<comment type="similarity">
    <text evidence="1">Belongs to the TRAFAC class translation factor GTPase superfamily. Classic translation factor GTPase family. LepA subfamily.</text>
</comment>
<proteinExistence type="inferred from homology"/>
<gene>
    <name evidence="1" type="primary">lepA</name>
    <name type="ordered locus">ASA_3488</name>
</gene>
<feature type="chain" id="PRO_1000031962" description="Elongation factor 4">
    <location>
        <begin position="1"/>
        <end position="597"/>
    </location>
</feature>
<feature type="domain" description="tr-type G">
    <location>
        <begin position="2"/>
        <end position="184"/>
    </location>
</feature>
<feature type="binding site" evidence="1">
    <location>
        <begin position="14"/>
        <end position="19"/>
    </location>
    <ligand>
        <name>GTP</name>
        <dbReference type="ChEBI" id="CHEBI:37565"/>
    </ligand>
</feature>
<feature type="binding site" evidence="1">
    <location>
        <begin position="131"/>
        <end position="134"/>
    </location>
    <ligand>
        <name>GTP</name>
        <dbReference type="ChEBI" id="CHEBI:37565"/>
    </ligand>
</feature>
<protein>
    <recommendedName>
        <fullName evidence="1">Elongation factor 4</fullName>
        <shortName evidence="1">EF-4</shortName>
        <ecNumber evidence="1">3.6.5.n1</ecNumber>
    </recommendedName>
    <alternativeName>
        <fullName evidence="1">Ribosomal back-translocase LepA</fullName>
    </alternativeName>
</protein>
<reference key="1">
    <citation type="journal article" date="2008" name="BMC Genomics">
        <title>The genome of Aeromonas salmonicida subsp. salmonicida A449: insights into the evolution of a fish pathogen.</title>
        <authorList>
            <person name="Reith M.E."/>
            <person name="Singh R.K."/>
            <person name="Curtis B."/>
            <person name="Boyd J.M."/>
            <person name="Bouevitch A."/>
            <person name="Kimball J."/>
            <person name="Munholland J."/>
            <person name="Murphy C."/>
            <person name="Sarty D."/>
            <person name="Williams J."/>
            <person name="Nash J.H."/>
            <person name="Johnson S.C."/>
            <person name="Brown L.L."/>
        </authorList>
    </citation>
    <scope>NUCLEOTIDE SEQUENCE [LARGE SCALE GENOMIC DNA]</scope>
    <source>
        <strain>A449</strain>
    </source>
</reference>
<evidence type="ECO:0000255" key="1">
    <source>
        <dbReference type="HAMAP-Rule" id="MF_00071"/>
    </source>
</evidence>
<organism>
    <name type="scientific">Aeromonas salmonicida (strain A449)</name>
    <dbReference type="NCBI Taxonomy" id="382245"/>
    <lineage>
        <taxon>Bacteria</taxon>
        <taxon>Pseudomonadati</taxon>
        <taxon>Pseudomonadota</taxon>
        <taxon>Gammaproteobacteria</taxon>
        <taxon>Aeromonadales</taxon>
        <taxon>Aeromonadaceae</taxon>
        <taxon>Aeromonas</taxon>
    </lineage>
</organism>
<dbReference type="EC" id="3.6.5.n1" evidence="1"/>
<dbReference type="EMBL" id="CP000644">
    <property type="protein sequence ID" value="ABO91456.1"/>
    <property type="molecule type" value="Genomic_DNA"/>
</dbReference>
<dbReference type="RefSeq" id="WP_005318848.1">
    <property type="nucleotide sequence ID" value="NC_009348.1"/>
</dbReference>
<dbReference type="SMR" id="A4SRD4"/>
<dbReference type="STRING" id="29491.GCA_000820065_02034"/>
<dbReference type="GeneID" id="79881252"/>
<dbReference type="KEGG" id="asa:ASA_3488"/>
<dbReference type="eggNOG" id="COG0481">
    <property type="taxonomic scope" value="Bacteria"/>
</dbReference>
<dbReference type="HOGENOM" id="CLU_009995_3_3_6"/>
<dbReference type="Proteomes" id="UP000000225">
    <property type="component" value="Chromosome"/>
</dbReference>
<dbReference type="GO" id="GO:0005886">
    <property type="term" value="C:plasma membrane"/>
    <property type="evidence" value="ECO:0007669"/>
    <property type="project" value="UniProtKB-SubCell"/>
</dbReference>
<dbReference type="GO" id="GO:0005525">
    <property type="term" value="F:GTP binding"/>
    <property type="evidence" value="ECO:0007669"/>
    <property type="project" value="UniProtKB-UniRule"/>
</dbReference>
<dbReference type="GO" id="GO:0003924">
    <property type="term" value="F:GTPase activity"/>
    <property type="evidence" value="ECO:0007669"/>
    <property type="project" value="UniProtKB-UniRule"/>
</dbReference>
<dbReference type="GO" id="GO:0097216">
    <property type="term" value="F:guanosine tetraphosphate binding"/>
    <property type="evidence" value="ECO:0007669"/>
    <property type="project" value="UniProtKB-ARBA"/>
</dbReference>
<dbReference type="GO" id="GO:0043022">
    <property type="term" value="F:ribosome binding"/>
    <property type="evidence" value="ECO:0007669"/>
    <property type="project" value="UniProtKB-UniRule"/>
</dbReference>
<dbReference type="GO" id="GO:0003746">
    <property type="term" value="F:translation elongation factor activity"/>
    <property type="evidence" value="ECO:0007669"/>
    <property type="project" value="UniProtKB-UniRule"/>
</dbReference>
<dbReference type="GO" id="GO:0045727">
    <property type="term" value="P:positive regulation of translation"/>
    <property type="evidence" value="ECO:0007669"/>
    <property type="project" value="UniProtKB-UniRule"/>
</dbReference>
<dbReference type="CDD" id="cd03699">
    <property type="entry name" value="EF4_II"/>
    <property type="match status" value="1"/>
</dbReference>
<dbReference type="CDD" id="cd16260">
    <property type="entry name" value="EF4_III"/>
    <property type="match status" value="1"/>
</dbReference>
<dbReference type="CDD" id="cd01890">
    <property type="entry name" value="LepA"/>
    <property type="match status" value="1"/>
</dbReference>
<dbReference type="CDD" id="cd03709">
    <property type="entry name" value="lepA_C"/>
    <property type="match status" value="1"/>
</dbReference>
<dbReference type="FunFam" id="3.40.50.300:FF:000078">
    <property type="entry name" value="Elongation factor 4"/>
    <property type="match status" value="1"/>
</dbReference>
<dbReference type="FunFam" id="2.40.30.10:FF:000015">
    <property type="entry name" value="Translation factor GUF1, mitochondrial"/>
    <property type="match status" value="1"/>
</dbReference>
<dbReference type="FunFam" id="3.30.70.240:FF:000007">
    <property type="entry name" value="Translation factor GUF1, mitochondrial"/>
    <property type="match status" value="1"/>
</dbReference>
<dbReference type="FunFam" id="3.30.70.2570:FF:000001">
    <property type="entry name" value="Translation factor GUF1, mitochondrial"/>
    <property type="match status" value="1"/>
</dbReference>
<dbReference type="FunFam" id="3.30.70.870:FF:000004">
    <property type="entry name" value="Translation factor GUF1, mitochondrial"/>
    <property type="match status" value="1"/>
</dbReference>
<dbReference type="Gene3D" id="3.30.70.240">
    <property type="match status" value="1"/>
</dbReference>
<dbReference type="Gene3D" id="3.30.70.2570">
    <property type="entry name" value="Elongation factor 4, C-terminal domain"/>
    <property type="match status" value="1"/>
</dbReference>
<dbReference type="Gene3D" id="3.30.70.870">
    <property type="entry name" value="Elongation Factor G (Translational Gtpase), domain 3"/>
    <property type="match status" value="1"/>
</dbReference>
<dbReference type="Gene3D" id="3.40.50.300">
    <property type="entry name" value="P-loop containing nucleotide triphosphate hydrolases"/>
    <property type="match status" value="1"/>
</dbReference>
<dbReference type="Gene3D" id="2.40.30.10">
    <property type="entry name" value="Translation factors"/>
    <property type="match status" value="1"/>
</dbReference>
<dbReference type="HAMAP" id="MF_00071">
    <property type="entry name" value="LepA"/>
    <property type="match status" value="1"/>
</dbReference>
<dbReference type="InterPro" id="IPR006297">
    <property type="entry name" value="EF-4"/>
</dbReference>
<dbReference type="InterPro" id="IPR035647">
    <property type="entry name" value="EFG_III/V"/>
</dbReference>
<dbReference type="InterPro" id="IPR000640">
    <property type="entry name" value="EFG_V-like"/>
</dbReference>
<dbReference type="InterPro" id="IPR004161">
    <property type="entry name" value="EFTu-like_2"/>
</dbReference>
<dbReference type="InterPro" id="IPR031157">
    <property type="entry name" value="G_TR_CS"/>
</dbReference>
<dbReference type="InterPro" id="IPR038363">
    <property type="entry name" value="LepA_C_sf"/>
</dbReference>
<dbReference type="InterPro" id="IPR013842">
    <property type="entry name" value="LepA_CTD"/>
</dbReference>
<dbReference type="InterPro" id="IPR035654">
    <property type="entry name" value="LepA_IV"/>
</dbReference>
<dbReference type="InterPro" id="IPR027417">
    <property type="entry name" value="P-loop_NTPase"/>
</dbReference>
<dbReference type="InterPro" id="IPR005225">
    <property type="entry name" value="Small_GTP-bd"/>
</dbReference>
<dbReference type="InterPro" id="IPR000795">
    <property type="entry name" value="T_Tr_GTP-bd_dom"/>
</dbReference>
<dbReference type="NCBIfam" id="TIGR01393">
    <property type="entry name" value="lepA"/>
    <property type="match status" value="1"/>
</dbReference>
<dbReference type="NCBIfam" id="TIGR00231">
    <property type="entry name" value="small_GTP"/>
    <property type="match status" value="1"/>
</dbReference>
<dbReference type="PANTHER" id="PTHR43512:SF4">
    <property type="entry name" value="TRANSLATION FACTOR GUF1 HOMOLOG, CHLOROPLASTIC"/>
    <property type="match status" value="1"/>
</dbReference>
<dbReference type="PANTHER" id="PTHR43512">
    <property type="entry name" value="TRANSLATION FACTOR GUF1-RELATED"/>
    <property type="match status" value="1"/>
</dbReference>
<dbReference type="Pfam" id="PF00679">
    <property type="entry name" value="EFG_C"/>
    <property type="match status" value="1"/>
</dbReference>
<dbReference type="Pfam" id="PF00009">
    <property type="entry name" value="GTP_EFTU"/>
    <property type="match status" value="1"/>
</dbReference>
<dbReference type="Pfam" id="PF03144">
    <property type="entry name" value="GTP_EFTU_D2"/>
    <property type="match status" value="1"/>
</dbReference>
<dbReference type="Pfam" id="PF06421">
    <property type="entry name" value="LepA_C"/>
    <property type="match status" value="1"/>
</dbReference>
<dbReference type="PRINTS" id="PR00315">
    <property type="entry name" value="ELONGATNFCT"/>
</dbReference>
<dbReference type="SMART" id="SM00838">
    <property type="entry name" value="EFG_C"/>
    <property type="match status" value="1"/>
</dbReference>
<dbReference type="SUPFAM" id="SSF54980">
    <property type="entry name" value="EF-G C-terminal domain-like"/>
    <property type="match status" value="2"/>
</dbReference>
<dbReference type="SUPFAM" id="SSF52540">
    <property type="entry name" value="P-loop containing nucleoside triphosphate hydrolases"/>
    <property type="match status" value="1"/>
</dbReference>
<dbReference type="PROSITE" id="PS00301">
    <property type="entry name" value="G_TR_1"/>
    <property type="match status" value="1"/>
</dbReference>
<dbReference type="PROSITE" id="PS51722">
    <property type="entry name" value="G_TR_2"/>
    <property type="match status" value="1"/>
</dbReference>
<keyword id="KW-0997">Cell inner membrane</keyword>
<keyword id="KW-1003">Cell membrane</keyword>
<keyword id="KW-0342">GTP-binding</keyword>
<keyword id="KW-0378">Hydrolase</keyword>
<keyword id="KW-0472">Membrane</keyword>
<keyword id="KW-0547">Nucleotide-binding</keyword>
<keyword id="KW-0648">Protein biosynthesis</keyword>
<sequence>MKHIRNFSIIAHIDHGKSTLSDRLIQTCGGLSSREMQAQVLDSMDLERERGITIKAQSVTLNYQAQDGNTYQLNFIDTPGHVDFSYEVSRSLAACEGALLVVDAGQGVEAQTLANCYTAMEMELEVVPVLNKIDLPAAEPERVAEEIEDIVGIDAIDAVRCSAKTGLGVDLVLEEIVARIPAPVGDPDAPLQALIIDSWFDSYLGVVSLVRIKNGSLKKNDKIKVMSTGQVWGVDRIGIFTPKQVDTQGLGCGEVGWVVCGIKDIHGAPVGDTLTQAKNGAEKALAGFKKVKPQVYAGLFPISSDDYESFRDALDKLSLNDASLFFEPESSTALGFGFRCGFLGMLHMEIIQERLEREYDLDLITTAPTVVYEIELNDGSTIHIDSPSAMPPVNNIKEMREPIAECNILLPQEYMGNVITLCIEKRGVQTNMVYHGNQVALTYEIPMAEVVLDFFDRLKSTSRGYASLDYGFKRFETSEMVRLDIMINGERVDALAIITHKENAQYRGRQVVEKMRELIPRQMFDIAIQASIGNQIIARSTVKALRKDVTAKCYGGDVSRKKKLLNKQKEGKKRMKSLGRVDVPQEAFLAILHVGKD</sequence>
<name>LEPA_AERS4</name>